<proteinExistence type="inferred from homology"/>
<comment type="function">
    <text evidence="1">Catalyzes 2 different reactions between oxygen and the acireductone 1,2-dihydroxy-3-keto-5-methylthiopentene (DHK-MTPene) depending upon the metal bound in the active site. Fe-containing acireductone dioxygenase (Fe-ARD) produces formate and 2-keto-4-methylthiobutyrate (KMTB), the alpha-ketoacid precursor of methionine in the methionine recycle pathway. Ni-containing acireductone dioxygenase (Ni-ARD) produces methylthiopropionate, carbon monoxide and formate, and does not lie on the methionine recycle pathway.</text>
</comment>
<comment type="catalytic activity">
    <reaction evidence="1">
        <text>1,2-dihydroxy-5-(methylsulfanyl)pent-1-en-3-one + O2 = 3-(methylsulfanyl)propanoate + CO + formate + 2 H(+)</text>
        <dbReference type="Rhea" id="RHEA:14161"/>
        <dbReference type="ChEBI" id="CHEBI:15378"/>
        <dbReference type="ChEBI" id="CHEBI:15379"/>
        <dbReference type="ChEBI" id="CHEBI:15740"/>
        <dbReference type="ChEBI" id="CHEBI:17245"/>
        <dbReference type="ChEBI" id="CHEBI:49016"/>
        <dbReference type="ChEBI" id="CHEBI:49252"/>
        <dbReference type="EC" id="1.13.11.53"/>
    </reaction>
</comment>
<comment type="catalytic activity">
    <reaction evidence="1">
        <text>1,2-dihydroxy-5-(methylsulfanyl)pent-1-en-3-one + O2 = 4-methylsulfanyl-2-oxobutanoate + formate + 2 H(+)</text>
        <dbReference type="Rhea" id="RHEA:24504"/>
        <dbReference type="ChEBI" id="CHEBI:15378"/>
        <dbReference type="ChEBI" id="CHEBI:15379"/>
        <dbReference type="ChEBI" id="CHEBI:15740"/>
        <dbReference type="ChEBI" id="CHEBI:16723"/>
        <dbReference type="ChEBI" id="CHEBI:49252"/>
        <dbReference type="EC" id="1.13.11.54"/>
    </reaction>
</comment>
<comment type="cofactor">
    <cofactor evidence="1">
        <name>Fe(2+)</name>
        <dbReference type="ChEBI" id="CHEBI:29033"/>
    </cofactor>
    <text evidence="1">Binds 1 Fe(2+) cation per monomer.</text>
</comment>
<comment type="cofactor">
    <cofactor evidence="1">
        <name>Ni(2+)</name>
        <dbReference type="ChEBI" id="CHEBI:49786"/>
    </cofactor>
    <text evidence="1">Binds 1 nickel ion per monomer.</text>
</comment>
<comment type="pathway">
    <text evidence="1">Amino-acid biosynthesis; L-methionine biosynthesis via salvage pathway; L-methionine from S-methyl-5-thio-alpha-D-ribose 1-phosphate: step 5/6.</text>
</comment>
<comment type="subunit">
    <text evidence="1">Monomer.</text>
</comment>
<comment type="similarity">
    <text evidence="1">Belongs to the acireductone dioxygenase (ARD) family.</text>
</comment>
<keyword id="KW-0028">Amino-acid biosynthesis</keyword>
<keyword id="KW-0223">Dioxygenase</keyword>
<keyword id="KW-0408">Iron</keyword>
<keyword id="KW-0479">Metal-binding</keyword>
<keyword id="KW-0486">Methionine biosynthesis</keyword>
<keyword id="KW-0533">Nickel</keyword>
<keyword id="KW-0560">Oxidoreductase</keyword>
<dbReference type="EC" id="1.13.11.54" evidence="1"/>
<dbReference type="EC" id="1.13.11.53" evidence="1"/>
<dbReference type="EMBL" id="AE003849">
    <property type="protein sequence ID" value="AAF85009.1"/>
    <property type="molecule type" value="Genomic_DNA"/>
</dbReference>
<dbReference type="PIR" id="F82587">
    <property type="entry name" value="F82587"/>
</dbReference>
<dbReference type="RefSeq" id="WP_010894658.1">
    <property type="nucleotide sequence ID" value="NC_002488.3"/>
</dbReference>
<dbReference type="SMR" id="Q9PBD4"/>
<dbReference type="STRING" id="160492.XF_2210"/>
<dbReference type="KEGG" id="xfa:XF_2210"/>
<dbReference type="eggNOG" id="COG1791">
    <property type="taxonomic scope" value="Bacteria"/>
</dbReference>
<dbReference type="HOGENOM" id="CLU_125400_0_0_6"/>
<dbReference type="UniPathway" id="UPA00904">
    <property type="reaction ID" value="UER00878"/>
</dbReference>
<dbReference type="Proteomes" id="UP000000812">
    <property type="component" value="Chromosome"/>
</dbReference>
<dbReference type="GO" id="GO:0010308">
    <property type="term" value="F:acireductone dioxygenase (Ni2+-requiring) activity"/>
    <property type="evidence" value="ECO:0007669"/>
    <property type="project" value="UniProtKB-UniRule"/>
</dbReference>
<dbReference type="GO" id="GO:0010309">
    <property type="term" value="F:acireductone dioxygenase [iron(II)-requiring] activity"/>
    <property type="evidence" value="ECO:0007669"/>
    <property type="project" value="UniProtKB-UniRule"/>
</dbReference>
<dbReference type="GO" id="GO:0005506">
    <property type="term" value="F:iron ion binding"/>
    <property type="evidence" value="ECO:0007669"/>
    <property type="project" value="UniProtKB-UniRule"/>
</dbReference>
<dbReference type="GO" id="GO:0016151">
    <property type="term" value="F:nickel cation binding"/>
    <property type="evidence" value="ECO:0007669"/>
    <property type="project" value="UniProtKB-UniRule"/>
</dbReference>
<dbReference type="GO" id="GO:0019509">
    <property type="term" value="P:L-methionine salvage from methylthioadenosine"/>
    <property type="evidence" value="ECO:0007669"/>
    <property type="project" value="UniProtKB-UniRule"/>
</dbReference>
<dbReference type="GO" id="GO:0019284">
    <property type="term" value="P:L-methionine salvage from S-adenosylmethionine"/>
    <property type="evidence" value="ECO:0007669"/>
    <property type="project" value="InterPro"/>
</dbReference>
<dbReference type="CDD" id="cd02232">
    <property type="entry name" value="cupin_ARD"/>
    <property type="match status" value="1"/>
</dbReference>
<dbReference type="Gene3D" id="2.60.120.10">
    <property type="entry name" value="Jelly Rolls"/>
    <property type="match status" value="1"/>
</dbReference>
<dbReference type="HAMAP" id="MF_01682">
    <property type="entry name" value="Salvage_MtnD"/>
    <property type="match status" value="1"/>
</dbReference>
<dbReference type="InterPro" id="IPR004313">
    <property type="entry name" value="ARD"/>
</dbReference>
<dbReference type="InterPro" id="IPR023956">
    <property type="entry name" value="ARD_bac"/>
</dbReference>
<dbReference type="InterPro" id="IPR014710">
    <property type="entry name" value="RmlC-like_jellyroll"/>
</dbReference>
<dbReference type="InterPro" id="IPR011051">
    <property type="entry name" value="RmlC_Cupin_sf"/>
</dbReference>
<dbReference type="PANTHER" id="PTHR23418">
    <property type="entry name" value="ACIREDUCTONE DIOXYGENASE"/>
    <property type="match status" value="1"/>
</dbReference>
<dbReference type="PANTHER" id="PTHR23418:SF0">
    <property type="entry name" value="ACIREDUCTONE DIOXYGENASE"/>
    <property type="match status" value="1"/>
</dbReference>
<dbReference type="Pfam" id="PF03079">
    <property type="entry name" value="ARD"/>
    <property type="match status" value="1"/>
</dbReference>
<dbReference type="SUPFAM" id="SSF51182">
    <property type="entry name" value="RmlC-like cupins"/>
    <property type="match status" value="1"/>
</dbReference>
<reference key="1">
    <citation type="journal article" date="2000" name="Nature">
        <title>The genome sequence of the plant pathogen Xylella fastidiosa.</title>
        <authorList>
            <person name="Simpson A.J.G."/>
            <person name="Reinach F.C."/>
            <person name="Arruda P."/>
            <person name="Abreu F.A."/>
            <person name="Acencio M."/>
            <person name="Alvarenga R."/>
            <person name="Alves L.M.C."/>
            <person name="Araya J.E."/>
            <person name="Baia G.S."/>
            <person name="Baptista C.S."/>
            <person name="Barros M.H."/>
            <person name="Bonaccorsi E.D."/>
            <person name="Bordin S."/>
            <person name="Bove J.M."/>
            <person name="Briones M.R.S."/>
            <person name="Bueno M.R.P."/>
            <person name="Camargo A.A."/>
            <person name="Camargo L.E.A."/>
            <person name="Carraro D.M."/>
            <person name="Carrer H."/>
            <person name="Colauto N.B."/>
            <person name="Colombo C."/>
            <person name="Costa F.F."/>
            <person name="Costa M.C.R."/>
            <person name="Costa-Neto C.M."/>
            <person name="Coutinho L.L."/>
            <person name="Cristofani M."/>
            <person name="Dias-Neto E."/>
            <person name="Docena C."/>
            <person name="El-Dorry H."/>
            <person name="Facincani A.P."/>
            <person name="Ferreira A.J.S."/>
            <person name="Ferreira V.C.A."/>
            <person name="Ferro J.A."/>
            <person name="Fraga J.S."/>
            <person name="Franca S.C."/>
            <person name="Franco M.C."/>
            <person name="Frohme M."/>
            <person name="Furlan L.R."/>
            <person name="Garnier M."/>
            <person name="Goldman G.H."/>
            <person name="Goldman M.H.S."/>
            <person name="Gomes S.L."/>
            <person name="Gruber A."/>
            <person name="Ho P.L."/>
            <person name="Hoheisel J.D."/>
            <person name="Junqueira M.L."/>
            <person name="Kemper E.L."/>
            <person name="Kitajima J.P."/>
            <person name="Krieger J.E."/>
            <person name="Kuramae E.E."/>
            <person name="Laigret F."/>
            <person name="Lambais M.R."/>
            <person name="Leite L.C.C."/>
            <person name="Lemos E.G.M."/>
            <person name="Lemos M.V.F."/>
            <person name="Lopes S.A."/>
            <person name="Lopes C.R."/>
            <person name="Machado J.A."/>
            <person name="Machado M.A."/>
            <person name="Madeira A.M.B.N."/>
            <person name="Madeira H.M.F."/>
            <person name="Marino C.L."/>
            <person name="Marques M.V."/>
            <person name="Martins E.A.L."/>
            <person name="Martins E.M.F."/>
            <person name="Matsukuma A.Y."/>
            <person name="Menck C.F.M."/>
            <person name="Miracca E.C."/>
            <person name="Miyaki C.Y."/>
            <person name="Monteiro-Vitorello C.B."/>
            <person name="Moon D.H."/>
            <person name="Nagai M.A."/>
            <person name="Nascimento A.L.T.O."/>
            <person name="Netto L.E.S."/>
            <person name="Nhani A. Jr."/>
            <person name="Nobrega F.G."/>
            <person name="Nunes L.R."/>
            <person name="Oliveira M.A."/>
            <person name="de Oliveira M.C."/>
            <person name="de Oliveira R.C."/>
            <person name="Palmieri D.A."/>
            <person name="Paris A."/>
            <person name="Peixoto B.R."/>
            <person name="Pereira G.A.G."/>
            <person name="Pereira H.A. Jr."/>
            <person name="Pesquero J.B."/>
            <person name="Quaggio R.B."/>
            <person name="Roberto P.G."/>
            <person name="Rodrigues V."/>
            <person name="de Rosa A.J.M."/>
            <person name="de Rosa V.E. Jr."/>
            <person name="de Sa R.G."/>
            <person name="Santelli R.V."/>
            <person name="Sawasaki H.E."/>
            <person name="da Silva A.C.R."/>
            <person name="da Silva A.M."/>
            <person name="da Silva F.R."/>
            <person name="Silva W.A. Jr."/>
            <person name="da Silveira J.F."/>
            <person name="Silvestri M.L.Z."/>
            <person name="Siqueira W.J."/>
            <person name="de Souza A.A."/>
            <person name="de Souza A.P."/>
            <person name="Terenzi M.F."/>
            <person name="Truffi D."/>
            <person name="Tsai S.M."/>
            <person name="Tsuhako M.H."/>
            <person name="Vallada H."/>
            <person name="Van Sluys M.A."/>
            <person name="Verjovski-Almeida S."/>
            <person name="Vettore A.L."/>
            <person name="Zago M.A."/>
            <person name="Zatz M."/>
            <person name="Meidanis J."/>
            <person name="Setubal J.C."/>
        </authorList>
    </citation>
    <scope>NUCLEOTIDE SEQUENCE [LARGE SCALE GENOMIC DNA]</scope>
    <source>
        <strain>9a5c</strain>
    </source>
</reference>
<accession>Q9PBD4</accession>
<organism>
    <name type="scientific">Xylella fastidiosa (strain 9a5c)</name>
    <dbReference type="NCBI Taxonomy" id="160492"/>
    <lineage>
        <taxon>Bacteria</taxon>
        <taxon>Pseudomonadati</taxon>
        <taxon>Pseudomonadota</taxon>
        <taxon>Gammaproteobacteria</taxon>
        <taxon>Lysobacterales</taxon>
        <taxon>Lysobacteraceae</taxon>
        <taxon>Xylella</taxon>
    </lineage>
</organism>
<gene>
    <name evidence="1" type="primary">mtnD</name>
    <name type="ordered locus">XF_2210</name>
</gene>
<evidence type="ECO:0000255" key="1">
    <source>
        <dbReference type="HAMAP-Rule" id="MF_01682"/>
    </source>
</evidence>
<sequence>MSRLRIFDDHTPDTPFFVSKEQTQITAELHKIGITFERWEATQAIEPGATPEQVMAAYRADIDRLIATHGFKTVDVVSIAPDNPKREEMRAKFLEEHFHKEDEVRFFVAGSGLFTVHSGNKVYEIECVKNDLIAIPDGTQHWFDMGAAPYFVAIRFFTEPDGWVGHFTGTDIAQRFPRYIPEGCQSAH</sequence>
<protein>
    <recommendedName>
        <fullName evidence="1">Acireductone dioxygenase</fullName>
    </recommendedName>
    <alternativeName>
        <fullName evidence="1">1,2-dihydroxy-3-keto-5-methylthiopentene dioxygenase</fullName>
        <shortName evidence="1">DHK-MTPene dioxygenase</shortName>
    </alternativeName>
    <alternativeName>
        <fullName evidence="1">Acireductone dioxygenase (Fe(2+)-requiring)</fullName>
        <shortName evidence="1">ARD'</shortName>
        <shortName evidence="1">Fe-ARD</shortName>
        <ecNumber evidence="1">1.13.11.54</ecNumber>
    </alternativeName>
    <alternativeName>
        <fullName evidence="1">Acireductone dioxygenase (Ni(2+)-requiring)</fullName>
        <shortName evidence="1">ARD</shortName>
        <shortName evidence="1">Ni-ARD</shortName>
        <ecNumber evidence="1">1.13.11.53</ecNumber>
    </alternativeName>
</protein>
<feature type="chain" id="PRO_0000359254" description="Acireductone dioxygenase">
    <location>
        <begin position="1"/>
        <end position="188"/>
    </location>
</feature>
<feature type="binding site" evidence="1">
    <location>
        <position position="97"/>
    </location>
    <ligand>
        <name>Fe(2+)</name>
        <dbReference type="ChEBI" id="CHEBI:29033"/>
    </ligand>
</feature>
<feature type="binding site" evidence="1">
    <location>
        <position position="97"/>
    </location>
    <ligand>
        <name>Ni(2+)</name>
        <dbReference type="ChEBI" id="CHEBI:49786"/>
    </ligand>
</feature>
<feature type="binding site" evidence="1">
    <location>
        <position position="99"/>
    </location>
    <ligand>
        <name>Fe(2+)</name>
        <dbReference type="ChEBI" id="CHEBI:29033"/>
    </ligand>
</feature>
<feature type="binding site" evidence="1">
    <location>
        <position position="99"/>
    </location>
    <ligand>
        <name>Ni(2+)</name>
        <dbReference type="ChEBI" id="CHEBI:49786"/>
    </ligand>
</feature>
<feature type="binding site" evidence="1">
    <location>
        <position position="103"/>
    </location>
    <ligand>
        <name>Fe(2+)</name>
        <dbReference type="ChEBI" id="CHEBI:29033"/>
    </ligand>
</feature>
<feature type="binding site" evidence="1">
    <location>
        <position position="103"/>
    </location>
    <ligand>
        <name>Ni(2+)</name>
        <dbReference type="ChEBI" id="CHEBI:49786"/>
    </ligand>
</feature>
<feature type="binding site" evidence="1">
    <location>
        <position position="141"/>
    </location>
    <ligand>
        <name>Fe(2+)</name>
        <dbReference type="ChEBI" id="CHEBI:29033"/>
    </ligand>
</feature>
<feature type="binding site" evidence="1">
    <location>
        <position position="141"/>
    </location>
    <ligand>
        <name>Ni(2+)</name>
        <dbReference type="ChEBI" id="CHEBI:49786"/>
    </ligand>
</feature>
<feature type="site" description="May play a role in metal incorporation in vivo" evidence="1">
    <location>
        <position position="96"/>
    </location>
</feature>
<feature type="site" description="May play a role in transmitting local conformational changes" evidence="1">
    <location>
        <position position="102"/>
    </location>
</feature>
<feature type="site" description="Important to generate the dianion" evidence="1">
    <location>
        <position position="105"/>
    </location>
</feature>
<name>MTND_XYLFA</name>